<sequence>MMYKAVFSDFNGTLLTSQHTISPRTVVVIKRLTANGIPFVPISARSPLGILPYWKQLETNNVLVAFSGALILNQNLEPIYSVQIEPKDILEINTVLAEHPLLGVNYYTNNDCHARDVENKWVIYERSVTKIEIHPFDEVATRSPHKIQIIGEAEEIIEIEVLLKEKFPHLSICRSHANFLEVMHKSATKGSAVRFLEDYFGVQTNEVIAFGDNFNDLDMLEHVGLGVAMGNAPNEIKQAANVVTATNNEDGLALILEEKFPE</sequence>
<comment type="cofactor">
    <cofactor evidence="1">
        <name>Mg(2+)</name>
        <dbReference type="ChEBI" id="CHEBI:18420"/>
    </cofactor>
</comment>
<comment type="similarity">
    <text evidence="2">Belongs to the HAD-like hydrolase superfamily. Cof family.</text>
</comment>
<reference key="1">
    <citation type="journal article" date="1995" name="Science">
        <title>Whole-genome random sequencing and assembly of Haemophilus influenzae Rd.</title>
        <authorList>
            <person name="Fleischmann R.D."/>
            <person name="Adams M.D."/>
            <person name="White O."/>
            <person name="Clayton R.A."/>
            <person name="Kirkness E.F."/>
            <person name="Kerlavage A.R."/>
            <person name="Bult C.J."/>
            <person name="Tomb J.-F."/>
            <person name="Dougherty B.A."/>
            <person name="Merrick J.M."/>
            <person name="McKenney K."/>
            <person name="Sutton G.G."/>
            <person name="FitzHugh W."/>
            <person name="Fields C.A."/>
            <person name="Gocayne J.D."/>
            <person name="Scott J.D."/>
            <person name="Shirley R."/>
            <person name="Liu L.-I."/>
            <person name="Glodek A."/>
            <person name="Kelley J.M."/>
            <person name="Weidman J.F."/>
            <person name="Phillips C.A."/>
            <person name="Spriggs T."/>
            <person name="Hedblom E."/>
            <person name="Cotton M.D."/>
            <person name="Utterback T.R."/>
            <person name="Hanna M.C."/>
            <person name="Nguyen D.T."/>
            <person name="Saudek D.M."/>
            <person name="Brandon R.C."/>
            <person name="Fine L.D."/>
            <person name="Fritchman J.L."/>
            <person name="Fuhrmann J.L."/>
            <person name="Geoghagen N.S.M."/>
            <person name="Gnehm C.L."/>
            <person name="McDonald L.A."/>
            <person name="Small K.V."/>
            <person name="Fraser C.M."/>
            <person name="Smith H.O."/>
            <person name="Venter J.C."/>
        </authorList>
    </citation>
    <scope>NUCLEOTIDE SEQUENCE [LARGE SCALE GENOMIC DNA]</scope>
    <source>
        <strain>ATCC 51907 / DSM 11121 / KW20 / Rd</strain>
    </source>
</reference>
<reference key="2">
    <citation type="journal article" date="2000" name="Electrophoresis">
        <title>Two-dimensional map of the proteome of Haemophilus influenzae.</title>
        <authorList>
            <person name="Langen H."/>
            <person name="Takacs B."/>
            <person name="Evers S."/>
            <person name="Berndt P."/>
            <person name="Lahm H.W."/>
            <person name="Wipf B."/>
            <person name="Gray C."/>
            <person name="Fountoulakis M."/>
        </authorList>
    </citation>
    <scope>IDENTIFICATION BY MASS SPECTROMETRY</scope>
    <source>
        <strain>ATCC 51907 / DSM 11121 / KW20 / Rd</strain>
    </source>
</reference>
<proteinExistence type="evidence at protein level"/>
<dbReference type="EC" id="3.1.3.-"/>
<dbReference type="EMBL" id="L42023">
    <property type="protein sequence ID" value="AAC21682.1"/>
    <property type="molecule type" value="Genomic_DNA"/>
</dbReference>
<dbReference type="PIR" id="I64139">
    <property type="entry name" value="I64139"/>
</dbReference>
<dbReference type="RefSeq" id="NP_438176.1">
    <property type="nucleotide sequence ID" value="NC_000907.1"/>
</dbReference>
<dbReference type="SMR" id="P44447"/>
<dbReference type="STRING" id="71421.HI_0003"/>
<dbReference type="EnsemblBacteria" id="AAC21682">
    <property type="protein sequence ID" value="AAC21682"/>
    <property type="gene ID" value="HI_0003"/>
</dbReference>
<dbReference type="KEGG" id="hin:HI_0003"/>
<dbReference type="PATRIC" id="fig|71421.8.peg.3"/>
<dbReference type="eggNOG" id="COG0561">
    <property type="taxonomic scope" value="Bacteria"/>
</dbReference>
<dbReference type="HOGENOM" id="CLU_044146_0_2_6"/>
<dbReference type="OrthoDB" id="9781413at2"/>
<dbReference type="PhylomeDB" id="P44447"/>
<dbReference type="BioCyc" id="HINF71421:G1GJ1-3-MONOMER"/>
<dbReference type="Proteomes" id="UP000000579">
    <property type="component" value="Chromosome"/>
</dbReference>
<dbReference type="GO" id="GO:0005829">
    <property type="term" value="C:cytosol"/>
    <property type="evidence" value="ECO:0000318"/>
    <property type="project" value="GO_Central"/>
</dbReference>
<dbReference type="GO" id="GO:0000287">
    <property type="term" value="F:magnesium ion binding"/>
    <property type="evidence" value="ECO:0000318"/>
    <property type="project" value="GO_Central"/>
</dbReference>
<dbReference type="GO" id="GO:0016791">
    <property type="term" value="F:phosphatase activity"/>
    <property type="evidence" value="ECO:0000318"/>
    <property type="project" value="GO_Central"/>
</dbReference>
<dbReference type="CDD" id="cd07516">
    <property type="entry name" value="HAD_Pase"/>
    <property type="match status" value="1"/>
</dbReference>
<dbReference type="Gene3D" id="3.30.1240.10">
    <property type="match status" value="1"/>
</dbReference>
<dbReference type="Gene3D" id="3.40.50.1000">
    <property type="entry name" value="HAD superfamily/HAD-like"/>
    <property type="match status" value="1"/>
</dbReference>
<dbReference type="InterPro" id="IPR000150">
    <property type="entry name" value="Cof"/>
</dbReference>
<dbReference type="InterPro" id="IPR036412">
    <property type="entry name" value="HAD-like_sf"/>
</dbReference>
<dbReference type="InterPro" id="IPR006379">
    <property type="entry name" value="HAD-SF_hydro_IIB"/>
</dbReference>
<dbReference type="InterPro" id="IPR023214">
    <property type="entry name" value="HAD_sf"/>
</dbReference>
<dbReference type="NCBIfam" id="TIGR00099">
    <property type="entry name" value="Cof-subfamily"/>
    <property type="match status" value="1"/>
</dbReference>
<dbReference type="NCBIfam" id="TIGR01484">
    <property type="entry name" value="HAD-SF-IIB"/>
    <property type="match status" value="1"/>
</dbReference>
<dbReference type="PANTHER" id="PTHR10000:SF8">
    <property type="entry name" value="HAD SUPERFAMILY HYDROLASE-LIKE, TYPE 3"/>
    <property type="match status" value="1"/>
</dbReference>
<dbReference type="PANTHER" id="PTHR10000">
    <property type="entry name" value="PHOSPHOSERINE PHOSPHATASE"/>
    <property type="match status" value="1"/>
</dbReference>
<dbReference type="Pfam" id="PF08282">
    <property type="entry name" value="Hydrolase_3"/>
    <property type="match status" value="1"/>
</dbReference>
<dbReference type="SUPFAM" id="SSF56784">
    <property type="entry name" value="HAD-like"/>
    <property type="match status" value="1"/>
</dbReference>
<dbReference type="PROSITE" id="PS01228">
    <property type="entry name" value="COF_1"/>
    <property type="match status" value="1"/>
</dbReference>
<dbReference type="PROSITE" id="PS01229">
    <property type="entry name" value="COF_2"/>
    <property type="match status" value="1"/>
</dbReference>
<name>Y003_HAEIN</name>
<organism>
    <name type="scientific">Haemophilus influenzae (strain ATCC 51907 / DSM 11121 / KW20 / Rd)</name>
    <dbReference type="NCBI Taxonomy" id="71421"/>
    <lineage>
        <taxon>Bacteria</taxon>
        <taxon>Pseudomonadati</taxon>
        <taxon>Pseudomonadota</taxon>
        <taxon>Gammaproteobacteria</taxon>
        <taxon>Pasteurellales</taxon>
        <taxon>Pasteurellaceae</taxon>
        <taxon>Haemophilus</taxon>
    </lineage>
</organism>
<protein>
    <recommendedName>
        <fullName>Putative phosphatase HI_0003</fullName>
        <ecNumber>3.1.3.-</ecNumber>
    </recommendedName>
</protein>
<gene>
    <name type="ordered locus">HI_0003</name>
</gene>
<keyword id="KW-0378">Hydrolase</keyword>
<keyword id="KW-0460">Magnesium</keyword>
<keyword id="KW-0479">Metal-binding</keyword>
<keyword id="KW-1185">Reference proteome</keyword>
<accession>P44447</accession>
<feature type="chain" id="PRO_0000054434" description="Putative phosphatase HI_0003">
    <location>
        <begin position="1"/>
        <end position="262"/>
    </location>
</feature>
<feature type="active site" description="Nucleophile" evidence="1">
    <location>
        <position position="9"/>
    </location>
</feature>
<feature type="binding site" evidence="1">
    <location>
        <position position="9"/>
    </location>
    <ligand>
        <name>Mg(2+)</name>
        <dbReference type="ChEBI" id="CHEBI:18420"/>
    </ligand>
</feature>
<feature type="binding site" evidence="1">
    <location>
        <position position="11"/>
    </location>
    <ligand>
        <name>Mg(2+)</name>
        <dbReference type="ChEBI" id="CHEBI:18420"/>
    </ligand>
</feature>
<feature type="binding site" evidence="1">
    <location>
        <begin position="43"/>
        <end position="44"/>
    </location>
    <ligand>
        <name>phosphate</name>
        <dbReference type="ChEBI" id="CHEBI:43474"/>
    </ligand>
</feature>
<feature type="binding site" evidence="1">
    <location>
        <position position="189"/>
    </location>
    <ligand>
        <name>phosphate</name>
        <dbReference type="ChEBI" id="CHEBI:43474"/>
    </ligand>
</feature>
<feature type="binding site" evidence="1">
    <location>
        <position position="212"/>
    </location>
    <ligand>
        <name>Mg(2+)</name>
        <dbReference type="ChEBI" id="CHEBI:18420"/>
    </ligand>
</feature>
<feature type="binding site" evidence="1">
    <location>
        <position position="215"/>
    </location>
    <ligand>
        <name>phosphate</name>
        <dbReference type="ChEBI" id="CHEBI:43474"/>
    </ligand>
</feature>
<evidence type="ECO:0000250" key="1"/>
<evidence type="ECO:0000305" key="2"/>